<organism>
    <name type="scientific">Mus musculus</name>
    <name type="common">Mouse</name>
    <dbReference type="NCBI Taxonomy" id="10090"/>
    <lineage>
        <taxon>Eukaryota</taxon>
        <taxon>Metazoa</taxon>
        <taxon>Chordata</taxon>
        <taxon>Craniata</taxon>
        <taxon>Vertebrata</taxon>
        <taxon>Euteleostomi</taxon>
        <taxon>Mammalia</taxon>
        <taxon>Eutheria</taxon>
        <taxon>Euarchontoglires</taxon>
        <taxon>Glires</taxon>
        <taxon>Rodentia</taxon>
        <taxon>Myomorpha</taxon>
        <taxon>Muroidea</taxon>
        <taxon>Muridae</taxon>
        <taxon>Murinae</taxon>
        <taxon>Mus</taxon>
        <taxon>Mus</taxon>
    </lineage>
</organism>
<dbReference type="EMBL" id="AF398883">
    <property type="protein sequence ID" value="AAL14464.1"/>
    <property type="molecule type" value="mRNA"/>
</dbReference>
<dbReference type="EMBL" id="AK028389">
    <property type="protein sequence ID" value="BAC25925.1"/>
    <property type="molecule type" value="mRNA"/>
</dbReference>
<dbReference type="EMBL" id="AK053306">
    <property type="protein sequence ID" value="BAC35336.1"/>
    <property type="molecule type" value="mRNA"/>
</dbReference>
<dbReference type="EMBL" id="BC024727">
    <property type="protein sequence ID" value="AAH24727.1"/>
    <property type="molecule type" value="mRNA"/>
</dbReference>
<dbReference type="EMBL" id="BC031782">
    <property type="protein sequence ID" value="AAH31782.1"/>
    <property type="molecule type" value="mRNA"/>
</dbReference>
<dbReference type="CCDS" id="CCDS26265.1">
    <molecule id="Q8BPU7-1"/>
</dbReference>
<dbReference type="RefSeq" id="NP_525027.1">
    <molecule id="Q8BPU7-1"/>
    <property type="nucleotide sequence ID" value="NM_080288.2"/>
</dbReference>
<dbReference type="RefSeq" id="NP_932761.1">
    <molecule id="Q8BPU7-2"/>
    <property type="nucleotide sequence ID" value="NM_198093.3"/>
</dbReference>
<dbReference type="RefSeq" id="XP_006516610.1">
    <molecule id="Q8BPU7-1"/>
    <property type="nucleotide sequence ID" value="XM_006516547.3"/>
</dbReference>
<dbReference type="RefSeq" id="XP_030103001.1">
    <molecule id="Q8BPU7-1"/>
    <property type="nucleotide sequence ID" value="XM_030247141.2"/>
</dbReference>
<dbReference type="SMR" id="Q8BPU7"/>
<dbReference type="BioGRID" id="228288">
    <property type="interactions" value="7"/>
</dbReference>
<dbReference type="CORUM" id="Q8BPU7"/>
<dbReference type="DIP" id="DIP-41244N"/>
<dbReference type="FunCoup" id="Q8BPU7">
    <property type="interactions" value="786"/>
</dbReference>
<dbReference type="IntAct" id="Q8BPU7">
    <property type="interactions" value="5"/>
</dbReference>
<dbReference type="MINT" id="Q8BPU7"/>
<dbReference type="STRING" id="10090.ENSMUSP00000072334"/>
<dbReference type="GlyGen" id="Q8BPU7">
    <property type="glycosylation" value="3 sites, 2 N-linked glycans (2 sites), 1 O-linked glycan (1 site)"/>
</dbReference>
<dbReference type="iPTMnet" id="Q8BPU7"/>
<dbReference type="PhosphoSitePlus" id="Q8BPU7"/>
<dbReference type="jPOST" id="Q8BPU7"/>
<dbReference type="PaxDb" id="10090-ENSMUSP00000072334"/>
<dbReference type="PeptideAtlas" id="Q8BPU7"/>
<dbReference type="ProteomicsDB" id="275594">
    <molecule id="Q8BPU7-1"/>
</dbReference>
<dbReference type="ProteomicsDB" id="275595">
    <molecule id="Q8BPU7-2"/>
</dbReference>
<dbReference type="ProteomicsDB" id="275596">
    <molecule id="Q8BPU7-3"/>
</dbReference>
<dbReference type="ProteomicsDB" id="275597">
    <molecule id="Q8BPU7-4"/>
</dbReference>
<dbReference type="Antibodypedia" id="12940">
    <property type="antibodies" value="227 antibodies from 34 providers"/>
</dbReference>
<dbReference type="DNASU" id="140580"/>
<dbReference type="Ensembl" id="ENSMUST00000072519.7">
    <molecule id="Q8BPU7-1"/>
    <property type="protein sequence ID" value="ENSMUSP00000072334.5"/>
    <property type="gene ID" value="ENSMUSG00000041112.19"/>
</dbReference>
<dbReference type="Ensembl" id="ENSMUST00000180626.2">
    <molecule id="Q8BPU7-3"/>
    <property type="protein sequence ID" value="ENSMUSP00000152595.2"/>
    <property type="gene ID" value="ENSMUSG00000041112.19"/>
</dbReference>
<dbReference type="Ensembl" id="ENSMUST00000249938.1">
    <molecule id="Q8BPU7-2"/>
    <property type="protein sequence ID" value="ENSMUSP00000160033.1"/>
    <property type="gene ID" value="ENSMUSG00000041112.19"/>
</dbReference>
<dbReference type="GeneID" id="140580"/>
<dbReference type="KEGG" id="mmu:140580"/>
<dbReference type="UCSC" id="uc007ppn.3">
    <molecule id="Q8BPU7-1"/>
    <property type="organism name" value="mouse"/>
</dbReference>
<dbReference type="UCSC" id="uc007ppo.1">
    <molecule id="Q8BPU7-3"/>
    <property type="organism name" value="mouse"/>
</dbReference>
<dbReference type="UCSC" id="uc007ppq.2">
    <molecule id="Q8BPU7-4"/>
    <property type="organism name" value="mouse"/>
</dbReference>
<dbReference type="UCSC" id="uc007ppr.3">
    <molecule id="Q8BPU7-2"/>
    <property type="organism name" value="mouse"/>
</dbReference>
<dbReference type="AGR" id="MGI:2153044"/>
<dbReference type="CTD" id="9844"/>
<dbReference type="MGI" id="MGI:2153044">
    <property type="gene designation" value="Elmo1"/>
</dbReference>
<dbReference type="VEuPathDB" id="HostDB:ENSMUSG00000041112"/>
<dbReference type="eggNOG" id="KOG2999">
    <property type="taxonomic scope" value="Eukaryota"/>
</dbReference>
<dbReference type="GeneTree" id="ENSGT00940000155994"/>
<dbReference type="HOGENOM" id="CLU_023887_0_0_1"/>
<dbReference type="InParanoid" id="Q8BPU7"/>
<dbReference type="OMA" id="CPHMKDL"/>
<dbReference type="OrthoDB" id="28413at2759"/>
<dbReference type="PhylomeDB" id="Q8BPU7"/>
<dbReference type="TreeFam" id="TF312966"/>
<dbReference type="Reactome" id="R-MMU-2029482">
    <property type="pathway name" value="Regulation of actin dynamics for phagocytic cup formation"/>
</dbReference>
<dbReference type="Reactome" id="R-MMU-4420097">
    <property type="pathway name" value="VEGFA-VEGFR2 Pathway"/>
</dbReference>
<dbReference type="Reactome" id="R-MMU-8849471">
    <property type="pathway name" value="PTK6 Regulates RHO GTPases, RAS GTPase and MAP kinases"/>
</dbReference>
<dbReference type="BioGRID-ORCS" id="140580">
    <property type="hits" value="5 hits in 74 CRISPR screens"/>
</dbReference>
<dbReference type="CD-CODE" id="CE726F99">
    <property type="entry name" value="Postsynaptic density"/>
</dbReference>
<dbReference type="ChiTaRS" id="Elmo1">
    <property type="organism name" value="mouse"/>
</dbReference>
<dbReference type="PRO" id="PR:Q8BPU7"/>
<dbReference type="Proteomes" id="UP000000589">
    <property type="component" value="Chromosome 13"/>
</dbReference>
<dbReference type="RNAct" id="Q8BPU7">
    <property type="molecule type" value="protein"/>
</dbReference>
<dbReference type="Bgee" id="ENSMUSG00000041112">
    <property type="expression patterns" value="Expressed in medial dorsal nucleus of thalamus and 257 other cell types or tissues"/>
</dbReference>
<dbReference type="ExpressionAtlas" id="Q8BPU7">
    <property type="expression patterns" value="baseline and differential"/>
</dbReference>
<dbReference type="GO" id="GO:0005737">
    <property type="term" value="C:cytoplasm"/>
    <property type="evidence" value="ECO:0000250"/>
    <property type="project" value="UniProtKB"/>
</dbReference>
<dbReference type="GO" id="GO:0098978">
    <property type="term" value="C:glutamatergic synapse"/>
    <property type="evidence" value="ECO:0000314"/>
    <property type="project" value="SynGO"/>
</dbReference>
<dbReference type="GO" id="GO:0032045">
    <property type="term" value="C:guanyl-nucleotide exchange factor complex"/>
    <property type="evidence" value="ECO:0000314"/>
    <property type="project" value="WormBase"/>
</dbReference>
<dbReference type="GO" id="GO:0005886">
    <property type="term" value="C:plasma membrane"/>
    <property type="evidence" value="ECO:0000250"/>
    <property type="project" value="UniProtKB"/>
</dbReference>
<dbReference type="GO" id="GO:0098794">
    <property type="term" value="C:postsynapse"/>
    <property type="evidence" value="ECO:0000314"/>
    <property type="project" value="SynGO"/>
</dbReference>
<dbReference type="GO" id="GO:0005085">
    <property type="term" value="F:guanyl-nucleotide exchange factor activity"/>
    <property type="evidence" value="ECO:0007669"/>
    <property type="project" value="Ensembl"/>
</dbReference>
<dbReference type="GO" id="GO:0017124">
    <property type="term" value="F:SH3 domain binding"/>
    <property type="evidence" value="ECO:0007669"/>
    <property type="project" value="UniProtKB-KW"/>
</dbReference>
<dbReference type="GO" id="GO:0030036">
    <property type="term" value="P:actin cytoskeleton organization"/>
    <property type="evidence" value="ECO:0000250"/>
    <property type="project" value="UniProtKB"/>
</dbReference>
<dbReference type="GO" id="GO:0030029">
    <property type="term" value="P:actin filament-based process"/>
    <property type="evidence" value="ECO:0000314"/>
    <property type="project" value="MGI"/>
</dbReference>
<dbReference type="GO" id="GO:0006915">
    <property type="term" value="P:apoptotic process"/>
    <property type="evidence" value="ECO:0007669"/>
    <property type="project" value="UniProtKB-KW"/>
</dbReference>
<dbReference type="GO" id="GO:0048870">
    <property type="term" value="P:cell motility"/>
    <property type="evidence" value="ECO:0000250"/>
    <property type="project" value="UniProtKB"/>
</dbReference>
<dbReference type="GO" id="GO:0006909">
    <property type="term" value="P:phagocytosis"/>
    <property type="evidence" value="ECO:0000314"/>
    <property type="project" value="MGI"/>
</dbReference>
<dbReference type="GO" id="GO:0006911">
    <property type="term" value="P:phagocytosis, engulfment"/>
    <property type="evidence" value="ECO:0000250"/>
    <property type="project" value="UniProtKB"/>
</dbReference>
<dbReference type="GO" id="GO:0016601">
    <property type="term" value="P:Rac protein signal transduction"/>
    <property type="evidence" value="ECO:0000250"/>
    <property type="project" value="UniProtKB"/>
</dbReference>
<dbReference type="GO" id="GO:0150052">
    <property type="term" value="P:regulation of postsynapse assembly"/>
    <property type="evidence" value="ECO:0007669"/>
    <property type="project" value="Ensembl"/>
</dbReference>
<dbReference type="CDD" id="cd13359">
    <property type="entry name" value="PH_ELMO1_CED-12"/>
    <property type="match status" value="1"/>
</dbReference>
<dbReference type="FunFam" id="1.25.10.10:FF:000049">
    <property type="entry name" value="Engulfment and cell motility 1 (Ced-12 homolog)"/>
    <property type="match status" value="1"/>
</dbReference>
<dbReference type="FunFam" id="2.30.29.30:FF:000053">
    <property type="entry name" value="Engulfment and cell motility protein 1"/>
    <property type="match status" value="1"/>
</dbReference>
<dbReference type="Gene3D" id="6.10.250.810">
    <property type="match status" value="1"/>
</dbReference>
<dbReference type="Gene3D" id="1.25.10.10">
    <property type="entry name" value="Leucine-rich Repeat Variant"/>
    <property type="match status" value="1"/>
</dbReference>
<dbReference type="Gene3D" id="2.30.29.30">
    <property type="entry name" value="Pleckstrin-homology domain (PH domain)/Phosphotyrosine-binding domain (PTB)"/>
    <property type="match status" value="1"/>
</dbReference>
<dbReference type="Gene3D" id="2.30.30.40">
    <property type="entry name" value="SH3 Domains"/>
    <property type="match status" value="1"/>
</dbReference>
<dbReference type="InterPro" id="IPR011989">
    <property type="entry name" value="ARM-like"/>
</dbReference>
<dbReference type="InterPro" id="IPR016024">
    <property type="entry name" value="ARM-type_fold"/>
</dbReference>
<dbReference type="InterPro" id="IPR024574">
    <property type="entry name" value="ELMO_ARM"/>
</dbReference>
<dbReference type="InterPro" id="IPR006816">
    <property type="entry name" value="ELMO_dom"/>
</dbReference>
<dbReference type="InterPro" id="IPR050868">
    <property type="entry name" value="ELMO_domain-containing"/>
</dbReference>
<dbReference type="InterPro" id="IPR011993">
    <property type="entry name" value="PH-like_dom_sf"/>
</dbReference>
<dbReference type="InterPro" id="IPR001849">
    <property type="entry name" value="PH_domain"/>
</dbReference>
<dbReference type="PANTHER" id="PTHR12771">
    <property type="entry name" value="ENGULFMENT AND CELL MOTILITY"/>
    <property type="match status" value="1"/>
</dbReference>
<dbReference type="PANTHER" id="PTHR12771:SF23">
    <property type="entry name" value="ENGULFMENT AND CELL MOTILITY PROTEIN 1"/>
    <property type="match status" value="1"/>
</dbReference>
<dbReference type="Pfam" id="PF11841">
    <property type="entry name" value="ELMO_ARM"/>
    <property type="match status" value="1"/>
</dbReference>
<dbReference type="Pfam" id="PF04727">
    <property type="entry name" value="ELMO_CED12"/>
    <property type="match status" value="1"/>
</dbReference>
<dbReference type="Pfam" id="PF16457">
    <property type="entry name" value="PH_12"/>
    <property type="match status" value="1"/>
</dbReference>
<dbReference type="SUPFAM" id="SSF48371">
    <property type="entry name" value="ARM repeat"/>
    <property type="match status" value="1"/>
</dbReference>
<dbReference type="SUPFAM" id="SSF50729">
    <property type="entry name" value="PH domain-like"/>
    <property type="match status" value="1"/>
</dbReference>
<dbReference type="PROSITE" id="PS51335">
    <property type="entry name" value="ELMO"/>
    <property type="match status" value="1"/>
</dbReference>
<keyword id="KW-0007">Acetylation</keyword>
<keyword id="KW-0025">Alternative splicing</keyword>
<keyword id="KW-0053">Apoptosis</keyword>
<keyword id="KW-1003">Cell membrane</keyword>
<keyword id="KW-0963">Cytoplasm</keyword>
<keyword id="KW-0472">Membrane</keyword>
<keyword id="KW-0581">Phagocytosis</keyword>
<keyword id="KW-0597">Phosphoprotein</keyword>
<keyword id="KW-1185">Reference proteome</keyword>
<keyword id="KW-0729">SH3-binding</keyword>
<reference key="1">
    <citation type="journal article" date="2001" name="Cell">
        <title>CED-12/ELMO, a novel member of the CrkII/Dock180/Rac pathway, is required for phagocytosis and cell migration.</title>
        <authorList>
            <person name="Gumienny T.L."/>
            <person name="Brugnera E."/>
            <person name="Tosello-Trampont A.-C."/>
            <person name="Kinchen J.M."/>
            <person name="Haney L.B."/>
            <person name="Nishiwaki K."/>
            <person name="Walk S.F."/>
            <person name="Nemergut M.E."/>
            <person name="Macara I.G."/>
            <person name="Francis R."/>
            <person name="Schedl T."/>
            <person name="Qin Y."/>
            <person name="Van Aelst L."/>
            <person name="Hengartner M.O."/>
            <person name="Ravichandran K.S."/>
        </authorList>
    </citation>
    <scope>NUCLEOTIDE SEQUENCE [MRNA] (ISOFORM 1)</scope>
    <source>
        <strain>C57BL/6J</strain>
    </source>
</reference>
<reference key="2">
    <citation type="journal article" date="2005" name="Science">
        <title>The transcriptional landscape of the mammalian genome.</title>
        <authorList>
            <person name="Carninci P."/>
            <person name="Kasukawa T."/>
            <person name="Katayama S."/>
            <person name="Gough J."/>
            <person name="Frith M.C."/>
            <person name="Maeda N."/>
            <person name="Oyama R."/>
            <person name="Ravasi T."/>
            <person name="Lenhard B."/>
            <person name="Wells C."/>
            <person name="Kodzius R."/>
            <person name="Shimokawa K."/>
            <person name="Bajic V.B."/>
            <person name="Brenner S.E."/>
            <person name="Batalov S."/>
            <person name="Forrest A.R."/>
            <person name="Zavolan M."/>
            <person name="Davis M.J."/>
            <person name="Wilming L.G."/>
            <person name="Aidinis V."/>
            <person name="Allen J.E."/>
            <person name="Ambesi-Impiombato A."/>
            <person name="Apweiler R."/>
            <person name="Aturaliya R.N."/>
            <person name="Bailey T.L."/>
            <person name="Bansal M."/>
            <person name="Baxter L."/>
            <person name="Beisel K.W."/>
            <person name="Bersano T."/>
            <person name="Bono H."/>
            <person name="Chalk A.M."/>
            <person name="Chiu K.P."/>
            <person name="Choudhary V."/>
            <person name="Christoffels A."/>
            <person name="Clutterbuck D.R."/>
            <person name="Crowe M.L."/>
            <person name="Dalla E."/>
            <person name="Dalrymple B.P."/>
            <person name="de Bono B."/>
            <person name="Della Gatta G."/>
            <person name="di Bernardo D."/>
            <person name="Down T."/>
            <person name="Engstrom P."/>
            <person name="Fagiolini M."/>
            <person name="Faulkner G."/>
            <person name="Fletcher C.F."/>
            <person name="Fukushima T."/>
            <person name="Furuno M."/>
            <person name="Futaki S."/>
            <person name="Gariboldi M."/>
            <person name="Georgii-Hemming P."/>
            <person name="Gingeras T.R."/>
            <person name="Gojobori T."/>
            <person name="Green R.E."/>
            <person name="Gustincich S."/>
            <person name="Harbers M."/>
            <person name="Hayashi Y."/>
            <person name="Hensch T.K."/>
            <person name="Hirokawa N."/>
            <person name="Hill D."/>
            <person name="Huminiecki L."/>
            <person name="Iacono M."/>
            <person name="Ikeo K."/>
            <person name="Iwama A."/>
            <person name="Ishikawa T."/>
            <person name="Jakt M."/>
            <person name="Kanapin A."/>
            <person name="Katoh M."/>
            <person name="Kawasawa Y."/>
            <person name="Kelso J."/>
            <person name="Kitamura H."/>
            <person name="Kitano H."/>
            <person name="Kollias G."/>
            <person name="Krishnan S.P."/>
            <person name="Kruger A."/>
            <person name="Kummerfeld S.K."/>
            <person name="Kurochkin I.V."/>
            <person name="Lareau L.F."/>
            <person name="Lazarevic D."/>
            <person name="Lipovich L."/>
            <person name="Liu J."/>
            <person name="Liuni S."/>
            <person name="McWilliam S."/>
            <person name="Madan Babu M."/>
            <person name="Madera M."/>
            <person name="Marchionni L."/>
            <person name="Matsuda H."/>
            <person name="Matsuzawa S."/>
            <person name="Miki H."/>
            <person name="Mignone F."/>
            <person name="Miyake S."/>
            <person name="Morris K."/>
            <person name="Mottagui-Tabar S."/>
            <person name="Mulder N."/>
            <person name="Nakano N."/>
            <person name="Nakauchi H."/>
            <person name="Ng P."/>
            <person name="Nilsson R."/>
            <person name="Nishiguchi S."/>
            <person name="Nishikawa S."/>
            <person name="Nori F."/>
            <person name="Ohara O."/>
            <person name="Okazaki Y."/>
            <person name="Orlando V."/>
            <person name="Pang K.C."/>
            <person name="Pavan W.J."/>
            <person name="Pavesi G."/>
            <person name="Pesole G."/>
            <person name="Petrovsky N."/>
            <person name="Piazza S."/>
            <person name="Reed J."/>
            <person name="Reid J.F."/>
            <person name="Ring B.Z."/>
            <person name="Ringwald M."/>
            <person name="Rost B."/>
            <person name="Ruan Y."/>
            <person name="Salzberg S.L."/>
            <person name="Sandelin A."/>
            <person name="Schneider C."/>
            <person name="Schoenbach C."/>
            <person name="Sekiguchi K."/>
            <person name="Semple C.A."/>
            <person name="Seno S."/>
            <person name="Sessa L."/>
            <person name="Sheng Y."/>
            <person name="Shibata Y."/>
            <person name="Shimada H."/>
            <person name="Shimada K."/>
            <person name="Silva D."/>
            <person name="Sinclair B."/>
            <person name="Sperling S."/>
            <person name="Stupka E."/>
            <person name="Sugiura K."/>
            <person name="Sultana R."/>
            <person name="Takenaka Y."/>
            <person name="Taki K."/>
            <person name="Tammoja K."/>
            <person name="Tan S.L."/>
            <person name="Tang S."/>
            <person name="Taylor M.S."/>
            <person name="Tegner J."/>
            <person name="Teichmann S.A."/>
            <person name="Ueda H.R."/>
            <person name="van Nimwegen E."/>
            <person name="Verardo R."/>
            <person name="Wei C.L."/>
            <person name="Yagi K."/>
            <person name="Yamanishi H."/>
            <person name="Zabarovsky E."/>
            <person name="Zhu S."/>
            <person name="Zimmer A."/>
            <person name="Hide W."/>
            <person name="Bult C."/>
            <person name="Grimmond S.M."/>
            <person name="Teasdale R.D."/>
            <person name="Liu E.T."/>
            <person name="Brusic V."/>
            <person name="Quackenbush J."/>
            <person name="Wahlestedt C."/>
            <person name="Mattick J.S."/>
            <person name="Hume D.A."/>
            <person name="Kai C."/>
            <person name="Sasaki D."/>
            <person name="Tomaru Y."/>
            <person name="Fukuda S."/>
            <person name="Kanamori-Katayama M."/>
            <person name="Suzuki M."/>
            <person name="Aoki J."/>
            <person name="Arakawa T."/>
            <person name="Iida J."/>
            <person name="Imamura K."/>
            <person name="Itoh M."/>
            <person name="Kato T."/>
            <person name="Kawaji H."/>
            <person name="Kawagashira N."/>
            <person name="Kawashima T."/>
            <person name="Kojima M."/>
            <person name="Kondo S."/>
            <person name="Konno H."/>
            <person name="Nakano K."/>
            <person name="Ninomiya N."/>
            <person name="Nishio T."/>
            <person name="Okada M."/>
            <person name="Plessy C."/>
            <person name="Shibata K."/>
            <person name="Shiraki T."/>
            <person name="Suzuki S."/>
            <person name="Tagami M."/>
            <person name="Waki K."/>
            <person name="Watahiki A."/>
            <person name="Okamura-Oho Y."/>
            <person name="Suzuki H."/>
            <person name="Kawai J."/>
            <person name="Hayashizaki Y."/>
        </authorList>
    </citation>
    <scope>NUCLEOTIDE SEQUENCE [LARGE SCALE MRNA] (ISOFORMS 3 AND 4)</scope>
</reference>
<reference key="3">
    <citation type="journal article" date="2004" name="Genome Res.">
        <title>The status, quality, and expansion of the NIH full-length cDNA project: the Mammalian Gene Collection (MGC).</title>
        <authorList>
            <consortium name="The MGC Project Team"/>
        </authorList>
    </citation>
    <scope>NUCLEOTIDE SEQUENCE [LARGE SCALE MRNA] OF 309-727 (ISOFORM 1)</scope>
    <scope>NUCLEOTIDE SEQUENCE [LARGE SCALE MRNA] (ISOFORM 2)</scope>
    <source>
        <strain>C57BL/6J</strain>
        <tissue>Eye</tissue>
        <tissue>Mammary tumor</tissue>
        <tissue>Retina</tissue>
    </source>
</reference>
<reference key="4">
    <citation type="journal article" date="2007" name="Nature">
        <title>BAI1 is an engulfment receptor for apoptotic cells upstream of the ELMO/Dock180/Rac module.</title>
        <authorList>
            <person name="Park D."/>
            <person name="Tosello-Trampont A.-C."/>
            <person name="Elliott M.R."/>
            <person name="Lu M."/>
            <person name="Haney L.B."/>
            <person name="Ma Z."/>
            <person name="Klibanov A.L."/>
            <person name="Mandell J.W."/>
            <person name="Ravichandran K.S."/>
        </authorList>
    </citation>
    <scope>INTERACTION WITH ADGRB1 AND DOCK1</scope>
</reference>
<reference key="5">
    <citation type="journal article" date="2010" name="Cell">
        <title>A tissue-specific atlas of mouse protein phosphorylation and expression.</title>
        <authorList>
            <person name="Huttlin E.L."/>
            <person name="Jedrychowski M.P."/>
            <person name="Elias J.E."/>
            <person name="Goswami T."/>
            <person name="Rad R."/>
            <person name="Beausoleil S.A."/>
            <person name="Villen J."/>
            <person name="Haas W."/>
            <person name="Sowa M.E."/>
            <person name="Gygi S.P."/>
        </authorList>
    </citation>
    <scope>PHOSPHORYLATION [LARGE SCALE ANALYSIS] AT SER-344</scope>
    <scope>IDENTIFICATION BY MASS SPECTROMETRY [LARGE SCALE ANALYSIS]</scope>
    <source>
        <tissue>Brain</tissue>
        <tissue>Heart</tissue>
        <tissue>Lung</tissue>
        <tissue>Spleen</tissue>
        <tissue>Testis</tissue>
    </source>
</reference>
<reference key="6">
    <citation type="journal article" date="2016" name="J. Cell Sci.">
        <title>Tensin 3 is a new partner of Dock5 that controls osteoclast podosome organization and activity.</title>
        <authorList>
            <person name="Touaitahuata H."/>
            <person name="Morel A."/>
            <person name="Urbach S."/>
            <person name="Mateos-Langerak J."/>
            <person name="de Rossi S."/>
            <person name="Blangy A."/>
        </authorList>
    </citation>
    <scope>INTERACTION WITH DOCK5</scope>
</reference>
<name>ELMO1_MOUSE</name>
<comment type="function">
    <text evidence="1">Involved in cytoskeletal rearrangements required for phagocytosis of apoptotic cells and cell motility. Acts in association with DOCK1 and CRK. Was initially proposed to be required in complex with DOCK1 to activate Rac Rho small GTPases. May enhance the guanine nucleotide exchange factor (GEF) activity of DOCK1 (By similarity).</text>
</comment>
<comment type="subunit">
    <text evidence="2 4 5">Interacts directly with the SH3-domain of DOCK1 via its SH3-binding site. Probably forms a heterotrimeric complex with DOCK1 and RAC1 (By similarity). Interacts with PLEKHG6. Interacts with HCK (via SH3 domain) (By similarity). Interacts with ADGRB1 (PubMed:17960134). Interacts with ADGRB3 (By similarity). Interacts with DOCK5 (PubMed:27505886).</text>
</comment>
<comment type="interaction">
    <interactant intactId="EBI-644162">
        <id>Q8BPU7-1</id>
    </interactant>
    <interactant intactId="EBI-646023">
        <id>Q8BUR4</id>
        <label>Dock1</label>
    </interactant>
    <organismsDiffer>false</organismsDiffer>
    <experiments>13</experiments>
</comment>
<comment type="subcellular location">
    <subcellularLocation>
        <location evidence="1">Cytoplasm</location>
    </subcellularLocation>
    <subcellularLocation>
        <location evidence="1">Cell membrane</location>
    </subcellularLocation>
    <text evidence="1">Translocation to plasma membrane seems to be mediated by DOCK1 and CRK.</text>
</comment>
<comment type="alternative products">
    <event type="alternative splicing"/>
    <isoform>
        <id>Q8BPU7-1</id>
        <name>1</name>
        <sequence type="displayed"/>
    </isoform>
    <isoform>
        <id>Q8BPU7-2</id>
        <name>2</name>
        <sequence type="described" ref="VSP_007481"/>
    </isoform>
    <isoform>
        <id>Q8BPU7-3</id>
        <name>3</name>
        <sequence type="described" ref="VSP_007482 VSP_007483"/>
    </isoform>
    <isoform>
        <id>Q8BPU7-4</id>
        <name>4</name>
        <sequence type="described" ref="VSP_007481 VSP_007484 VSP_007485"/>
    </isoform>
</comment>
<comment type="PTM">
    <text evidence="1">Phosphorylated by HCK.</text>
</comment>
<proteinExistence type="evidence at protein level"/>
<evidence type="ECO:0000250" key="1"/>
<evidence type="ECO:0000250" key="2">
    <source>
        <dbReference type="UniProtKB" id="Q92556"/>
    </source>
</evidence>
<evidence type="ECO:0000255" key="3">
    <source>
        <dbReference type="PROSITE-ProRule" id="PRU00664"/>
    </source>
</evidence>
<evidence type="ECO:0000269" key="4">
    <source>
    </source>
</evidence>
<evidence type="ECO:0000269" key="5">
    <source>
    </source>
</evidence>
<evidence type="ECO:0000303" key="6">
    <source>
    </source>
</evidence>
<evidence type="ECO:0000303" key="7">
    <source>
    </source>
</evidence>
<evidence type="ECO:0000305" key="8"/>
<evidence type="ECO:0007744" key="9">
    <source>
    </source>
</evidence>
<sequence>MPPPSDIVKVAIEWPGAYPKLMEIDQKKPLSAIIKEVCDGWSLANHEYFALQHADSSNFYITEKNRNEIKNGTILRLTTSPAQNAQQLHERIQSSSMDAKLEALKDLASLSRDVTFAQEFINLDGISLLTQMVESGTERYQKLQKIMKPCFGDMLSFTLTAFVELMDHGIVSWDTFSVAFIKKIASFVNKSAIDISILQRSLAILESMVLNSHDLYQKVAQEITIGQLIPHLQGTDQEIQTYTIAVINALFLKAPDERRQEMANILAQKQLRYIILTHVIRAQRAINNEMAHQLYVLQVLTFNLLEDRMMTKMDPQDQAQRDIIFELRRIAFDAESEPNNSSGSMEKRKSMYTRDYKKLGFINHVNPAMDFTQTPPGMLALDNMLYFAKHHQDAYIRIVLENSSREDKHECPFGRSSIELTKMLCEILKVGELPSETCNDFHPMFFTHDRSFEEFFCICIQLLNKTWKEMRATSEDFNKVMQVVKEQVMRALTTKPSSLDQFKSKLQNLSYTEILKIRQSERMNQEDFQSRPILELKEKIQPEILELIKQQRLNRLVEGTCFRKLNARRRQDKFWYCRLSPNHKVLHYGDLEESPQGEVPHDSLQDKLPVADIKAVVTGKDCPHMKEKGALKQNKEVLELAFSILYDSNCQLNFIAPDKHEYCIWTDGLNALLGKDMMSDLTRNDLDTLLSMEIKLRLLDLENIQIPDAPPPIPKEPSNYDFVYDCN</sequence>
<gene>
    <name type="primary">Elmo1</name>
</gene>
<feature type="chain" id="PRO_0000153713" description="Engulfment and cell motility protein 1">
    <location>
        <begin position="1"/>
        <end position="727"/>
    </location>
</feature>
<feature type="domain" description="ELMO" evidence="3">
    <location>
        <begin position="319"/>
        <end position="492"/>
    </location>
</feature>
<feature type="domain" description="PH">
    <location>
        <begin position="555"/>
        <end position="676"/>
    </location>
</feature>
<feature type="short sequence motif" description="SH3-binding">
    <location>
        <begin position="707"/>
        <end position="714"/>
    </location>
</feature>
<feature type="modified residue" description="Phosphotyrosine; by HCK" evidence="2">
    <location>
        <position position="18"/>
    </location>
</feature>
<feature type="modified residue" description="N6-acetyllysine" evidence="2">
    <location>
        <position position="100"/>
    </location>
</feature>
<feature type="modified residue" description="N6-acetyllysine" evidence="2">
    <location>
        <position position="105"/>
    </location>
</feature>
<feature type="modified residue" description="Phosphotyrosine; by HCK" evidence="2">
    <location>
        <position position="216"/>
    </location>
</feature>
<feature type="modified residue" description="Phosphoserine" evidence="9">
    <location>
        <position position="344"/>
    </location>
</feature>
<feature type="modified residue" description="Phosphotyrosine; by HCK" evidence="2">
    <location>
        <position position="395"/>
    </location>
</feature>
<feature type="modified residue" description="Phosphotyrosine; by HCK" evidence="2">
    <location>
        <position position="511"/>
    </location>
</feature>
<feature type="modified residue" description="Phosphotyrosine; by HCK" evidence="2">
    <location>
        <position position="720"/>
    </location>
</feature>
<feature type="splice variant" id="VSP_007481" description="In isoform 2 and isoform 4." evidence="6 7">
    <location>
        <begin position="1"/>
        <end position="480"/>
    </location>
</feature>
<feature type="splice variant" id="VSP_007482" description="In isoform 3." evidence="7">
    <original>IVLENSSREDKHECPFGRSSIEL</original>
    <variation>VSMLASLRYCQCRMEFCFPTYAQ</variation>
    <location>
        <begin position="398"/>
        <end position="420"/>
    </location>
</feature>
<feature type="splice variant" id="VSP_007483" description="In isoform 3." evidence="7">
    <location>
        <begin position="421"/>
        <end position="727"/>
    </location>
</feature>
<feature type="splice variant" id="VSP_007484" description="In isoform 4." evidence="7">
    <original>EVLELAF</original>
    <variation>VWFSKSL</variation>
    <location>
        <begin position="636"/>
        <end position="642"/>
    </location>
</feature>
<feature type="splice variant" id="VSP_007485" description="In isoform 4." evidence="7">
    <location>
        <begin position="643"/>
        <end position="727"/>
    </location>
</feature>
<feature type="sequence conflict" description="In Ref. 2; BAC25925." evidence="8" ref="2">
    <original>K</original>
    <variation>E</variation>
    <location>
        <position position="9"/>
    </location>
</feature>
<feature type="sequence conflict" description="In Ref. 2; BAC25925." evidence="8" ref="2">
    <original>P</original>
    <variation>H</variation>
    <location>
        <position position="315"/>
    </location>
</feature>
<accession>Q8BPU7</accession>
<accession>Q8BSY9</accession>
<accession>Q8K2C5</accession>
<accession>Q91ZU3</accession>
<protein>
    <recommendedName>
        <fullName>Engulfment and cell motility protein 1</fullName>
    </recommendedName>
    <alternativeName>
        <fullName>Protein ced-12 homolog</fullName>
    </alternativeName>
</protein>